<evidence type="ECO:0000250" key="1"/>
<evidence type="ECO:0000305" key="2"/>
<proteinExistence type="evidence at transcript level"/>
<dbReference type="EMBL" id="X64715">
    <property type="protein sequence ID" value="CAA45970.1"/>
    <property type="molecule type" value="Genomic_DNA"/>
</dbReference>
<dbReference type="PIR" id="S22401">
    <property type="entry name" value="S22401"/>
</dbReference>
<dbReference type="SMR" id="Q00630"/>
<dbReference type="EnsemblMetazoa" id="XM_030173610.2">
    <property type="protein sequence ID" value="XP_030029470.2"/>
    <property type="gene ID" value="LOC115446810"/>
</dbReference>
<dbReference type="OrthoDB" id="565904at2759"/>
<dbReference type="GO" id="GO:0005737">
    <property type="term" value="C:cytoplasm"/>
    <property type="evidence" value="ECO:0007669"/>
    <property type="project" value="TreeGrafter"/>
</dbReference>
<dbReference type="GO" id="GO:0005576">
    <property type="term" value="C:extracellular region"/>
    <property type="evidence" value="ECO:0007669"/>
    <property type="project" value="UniProtKB-SubCell"/>
</dbReference>
<dbReference type="GO" id="GO:0031409">
    <property type="term" value="F:pigment binding"/>
    <property type="evidence" value="ECO:0007669"/>
    <property type="project" value="UniProtKB-KW"/>
</dbReference>
<dbReference type="GO" id="GO:0006629">
    <property type="term" value="P:lipid metabolic process"/>
    <property type="evidence" value="ECO:0007669"/>
    <property type="project" value="TreeGrafter"/>
</dbReference>
<dbReference type="GO" id="GO:0000302">
    <property type="term" value="P:response to reactive oxygen species"/>
    <property type="evidence" value="ECO:0007669"/>
    <property type="project" value="TreeGrafter"/>
</dbReference>
<dbReference type="Gene3D" id="2.40.128.20">
    <property type="match status" value="1"/>
</dbReference>
<dbReference type="InterPro" id="IPR012674">
    <property type="entry name" value="Calycin"/>
</dbReference>
<dbReference type="InterPro" id="IPR003057">
    <property type="entry name" value="Invtbrt_color"/>
</dbReference>
<dbReference type="InterPro" id="IPR022271">
    <property type="entry name" value="Lipocalin_ApoD"/>
</dbReference>
<dbReference type="InterPro" id="IPR022272">
    <property type="entry name" value="Lipocalin_CS"/>
</dbReference>
<dbReference type="InterPro" id="IPR000566">
    <property type="entry name" value="Lipocln_cytosolic_FA-bd_dom"/>
</dbReference>
<dbReference type="PANTHER" id="PTHR10612">
    <property type="entry name" value="APOLIPOPROTEIN D"/>
    <property type="match status" value="1"/>
</dbReference>
<dbReference type="PANTHER" id="PTHR10612:SF58">
    <property type="entry name" value="APOLIPOPROTEIN D"/>
    <property type="match status" value="1"/>
</dbReference>
<dbReference type="Pfam" id="PF00061">
    <property type="entry name" value="Lipocalin"/>
    <property type="match status" value="1"/>
</dbReference>
<dbReference type="PIRSF" id="PIRSF036893">
    <property type="entry name" value="Lipocalin_ApoD"/>
    <property type="match status" value="1"/>
</dbReference>
<dbReference type="PRINTS" id="PR01273">
    <property type="entry name" value="INVTBRTCOLOR"/>
</dbReference>
<dbReference type="SUPFAM" id="SSF50814">
    <property type="entry name" value="Lipocalins"/>
    <property type="match status" value="1"/>
</dbReference>
<dbReference type="PROSITE" id="PS00213">
    <property type="entry name" value="LIPOCALIN"/>
    <property type="match status" value="1"/>
</dbReference>
<keyword id="KW-1015">Disulfide bond</keyword>
<keyword id="KW-0608">Pigment</keyword>
<keyword id="KW-0964">Secreted</keyword>
<keyword id="KW-0732">Signal</keyword>
<comment type="function">
    <text>This protein binds a chromophore: biliverdin IX, isomer gamma. Mixed with lipoprotein-bound carotenes, this blue protein provides hornworms with their green cryptic coloration which serves a camouflage.</text>
</comment>
<comment type="subunit">
    <text>Homotetramer.</text>
</comment>
<comment type="subcellular location">
    <subcellularLocation>
        <location>Secreted</location>
    </subcellularLocation>
</comment>
<comment type="tissue specificity">
    <text>Synthesized only in the caterpillars, apparently by the epidermis and secreted into the hemolymph. The protein is passed over from the larval hemolymph to that of pupae and adults and is sequestered in the eggs.</text>
</comment>
<comment type="domain">
    <text>The molecule consist primarily of eight antiparallel beta-pleated strands, which enclose a hydrophobic pocket, and an alpha-helix.</text>
</comment>
<comment type="similarity">
    <text evidence="2">Belongs to the calycin superfamily. Lipocalin family.</text>
</comment>
<gene>
    <name type="primary">INSB</name>
</gene>
<name>ICYB_MANSE</name>
<accession>Q00630</accession>
<reference key="1">
    <citation type="journal article" date="1992" name="Eur. J. Biochem.">
        <title>Two distinct genes encode two major isoelectric forms of insecticyanin in the tobacco hornworm, Manduca sexta.</title>
        <authorList>
            <person name="Li W."/>
            <person name="Riddiford L.M."/>
        </authorList>
    </citation>
    <scope>NUCLEOTIDE SEQUENCE [GENOMIC DNA]</scope>
</reference>
<sequence>MQRFLVFTIVAVATAAAGDIFYPGYCPDVKPVDDFDLSAFAGAWHEIAKLPLENENQGKCTIAEYKYDGKKASVYNSFVVNGVKEYMEGDLEIAPDAKYTKQGKYVMTFKFGQRVVNLVPWVLATDYKNYAINYNCNYHPDKKAHSIHAWILSKSKVLEGNTKEVVDNVLKTFSHLIDASKFISNDFSEAACQYSTTYSLTGPDRH</sequence>
<feature type="signal peptide">
    <location>
        <begin position="1"/>
        <end position="17"/>
    </location>
</feature>
<feature type="chain" id="PRO_0000017902" description="Insecticyanin-B">
    <location>
        <begin position="18"/>
        <end position="206"/>
    </location>
</feature>
<feature type="disulfide bond" evidence="1">
    <location>
        <begin position="26"/>
        <end position="136"/>
    </location>
</feature>
<feature type="disulfide bond" evidence="1">
    <location>
        <begin position="60"/>
        <end position="192"/>
    </location>
</feature>
<organism>
    <name type="scientific">Manduca sexta</name>
    <name type="common">Tobacco hawkmoth</name>
    <name type="synonym">Tobacco hornworm</name>
    <dbReference type="NCBI Taxonomy" id="7130"/>
    <lineage>
        <taxon>Eukaryota</taxon>
        <taxon>Metazoa</taxon>
        <taxon>Ecdysozoa</taxon>
        <taxon>Arthropoda</taxon>
        <taxon>Hexapoda</taxon>
        <taxon>Insecta</taxon>
        <taxon>Pterygota</taxon>
        <taxon>Neoptera</taxon>
        <taxon>Endopterygota</taxon>
        <taxon>Lepidoptera</taxon>
        <taxon>Glossata</taxon>
        <taxon>Ditrysia</taxon>
        <taxon>Bombycoidea</taxon>
        <taxon>Sphingidae</taxon>
        <taxon>Sphinginae</taxon>
        <taxon>Sphingini</taxon>
        <taxon>Manduca</taxon>
    </lineage>
</organism>
<protein>
    <recommendedName>
        <fullName>Insecticyanin-B</fullName>
        <shortName>INS-b</shortName>
    </recommendedName>
    <alternativeName>
        <fullName>Blue biliprotein</fullName>
    </alternativeName>
</protein>